<organism>
    <name type="scientific">Parabacteroides distasonis (strain ATCC 8503 / DSM 20701 / CIP 104284 / JCM 5825 / NCTC 11152)</name>
    <dbReference type="NCBI Taxonomy" id="435591"/>
    <lineage>
        <taxon>Bacteria</taxon>
        <taxon>Pseudomonadati</taxon>
        <taxon>Bacteroidota</taxon>
        <taxon>Bacteroidia</taxon>
        <taxon>Bacteroidales</taxon>
        <taxon>Tannerellaceae</taxon>
        <taxon>Parabacteroides</taxon>
    </lineage>
</organism>
<comment type="function">
    <text evidence="1">Catalyzes the formation of phosphatidylethanolamine (PtdEtn) from phosphatidylserine (PtdSer).</text>
</comment>
<comment type="catalytic activity">
    <reaction evidence="1">
        <text>a 1,2-diacyl-sn-glycero-3-phospho-L-serine + H(+) = a 1,2-diacyl-sn-glycero-3-phosphoethanolamine + CO2</text>
        <dbReference type="Rhea" id="RHEA:20828"/>
        <dbReference type="ChEBI" id="CHEBI:15378"/>
        <dbReference type="ChEBI" id="CHEBI:16526"/>
        <dbReference type="ChEBI" id="CHEBI:57262"/>
        <dbReference type="ChEBI" id="CHEBI:64612"/>
        <dbReference type="EC" id="4.1.1.65"/>
    </reaction>
</comment>
<comment type="cofactor">
    <cofactor evidence="1">
        <name>pyruvate</name>
        <dbReference type="ChEBI" id="CHEBI:15361"/>
    </cofactor>
    <text evidence="1">Binds 1 pyruvoyl group covalently per subunit.</text>
</comment>
<comment type="pathway">
    <text evidence="1">Phospholipid metabolism; phosphatidylethanolamine biosynthesis; phosphatidylethanolamine from CDP-diacylglycerol: step 2/2.</text>
</comment>
<comment type="subunit">
    <text evidence="1">Heterodimer of a large membrane-associated beta subunit and a small pyruvoyl-containing alpha subunit.</text>
</comment>
<comment type="subcellular location">
    <subcellularLocation>
        <location evidence="1">Cell membrane</location>
        <topology evidence="1">Peripheral membrane protein</topology>
    </subcellularLocation>
</comment>
<comment type="PTM">
    <text evidence="1">Is synthesized initially as an inactive proenzyme. Formation of the active enzyme involves a self-maturation process in which the active site pyruvoyl group is generated from an internal serine residue via an autocatalytic post-translational modification. Two non-identical subunits are generated from the proenzyme in this reaction, and the pyruvate is formed at the N-terminus of the alpha chain, which is derived from the carboxyl end of the proenzyme. The post-translation cleavage follows an unusual pathway, termed non-hydrolytic serinolysis, in which the side chain hydroxyl group of the serine supplies its oxygen atom to form the C-terminus of the beta chain, while the remainder of the serine residue undergoes an oxidative deamination to produce ammonia and the pyruvoyl prosthetic group on the alpha chain.</text>
</comment>
<comment type="similarity">
    <text evidence="1">Belongs to the phosphatidylserine decarboxylase family. PSD-A subfamily.</text>
</comment>
<reference key="1">
    <citation type="journal article" date="2007" name="PLoS Biol.">
        <title>Evolution of symbiotic bacteria in the distal human intestine.</title>
        <authorList>
            <person name="Xu J."/>
            <person name="Mahowald M.A."/>
            <person name="Ley R.E."/>
            <person name="Lozupone C.A."/>
            <person name="Hamady M."/>
            <person name="Martens E.C."/>
            <person name="Henrissat B."/>
            <person name="Coutinho P.M."/>
            <person name="Minx P."/>
            <person name="Latreille P."/>
            <person name="Cordum H."/>
            <person name="Van Brunt A."/>
            <person name="Kim K."/>
            <person name="Fulton R.S."/>
            <person name="Fulton L.A."/>
            <person name="Clifton S.W."/>
            <person name="Wilson R.K."/>
            <person name="Knight R.D."/>
            <person name="Gordon J.I."/>
        </authorList>
    </citation>
    <scope>NUCLEOTIDE SEQUENCE [LARGE SCALE GENOMIC DNA]</scope>
    <source>
        <strain>ATCC 8503 / DSM 20701 / CIP 104284 / JCM 5825 / NCTC 11152</strain>
    </source>
</reference>
<feature type="chain" id="PRO_1000026672" description="Phosphatidylserine decarboxylase beta chain" evidence="1">
    <location>
        <begin position="1"/>
        <end position="187"/>
    </location>
</feature>
<feature type="chain" id="PRO_1000026673" description="Phosphatidylserine decarboxylase alpha chain" evidence="1">
    <location>
        <begin position="188"/>
        <end position="220"/>
    </location>
</feature>
<feature type="active site" description="Schiff-base intermediate with substrate; via pyruvic acid" evidence="1">
    <location>
        <position position="188"/>
    </location>
</feature>
<feature type="site" description="Cleavage (non-hydrolytic); by autocatalysis" evidence="1">
    <location>
        <begin position="187"/>
        <end position="188"/>
    </location>
</feature>
<feature type="modified residue" description="Pyruvic acid (Ser); by autocatalysis" evidence="1">
    <location>
        <position position="188"/>
    </location>
</feature>
<name>PSD_PARD8</name>
<protein>
    <recommendedName>
        <fullName evidence="1">Phosphatidylserine decarboxylase proenzyme</fullName>
        <ecNumber evidence="1">4.1.1.65</ecNumber>
    </recommendedName>
    <component>
        <recommendedName>
            <fullName evidence="1">Phosphatidylserine decarboxylase alpha chain</fullName>
        </recommendedName>
    </component>
    <component>
        <recommendedName>
            <fullName evidence="1">Phosphatidylserine decarboxylase beta chain</fullName>
        </recommendedName>
    </component>
</protein>
<evidence type="ECO:0000255" key="1">
    <source>
        <dbReference type="HAMAP-Rule" id="MF_00664"/>
    </source>
</evidence>
<proteinExistence type="inferred from homology"/>
<sequence>MKVHKEGTGLLLTLFTILFIVNITLYHTVGKGMLFYSVAFVSTVLFLLVLNFFRSPFRRFPYDSEGLVIAPADGTIVAIEEVMENEILHKKCLQISIFMSIFNVHANWFPVNGTVKHVSHQNGRFMAAYLPKSSTENERSAVVITTRNGVDVLARQIAGAMARRIVTYAKPGEKCHVDEQMGFIKFGSRVDVYLPVGTEVLIEMDQKVTGNQTPIARLSK</sequence>
<dbReference type="EC" id="4.1.1.65" evidence="1"/>
<dbReference type="EMBL" id="CP000140">
    <property type="protein sequence ID" value="ABR44289.1"/>
    <property type="molecule type" value="Genomic_DNA"/>
</dbReference>
<dbReference type="RefSeq" id="WP_005861238.1">
    <property type="nucleotide sequence ID" value="NZ_LR215978.1"/>
</dbReference>
<dbReference type="SMR" id="A6LF25"/>
<dbReference type="STRING" id="435591.BDI_2570"/>
<dbReference type="PaxDb" id="435591-BDI_2570"/>
<dbReference type="KEGG" id="pdi:BDI_2570"/>
<dbReference type="eggNOG" id="COG0688">
    <property type="taxonomic scope" value="Bacteria"/>
</dbReference>
<dbReference type="HOGENOM" id="CLU_072492_1_0_10"/>
<dbReference type="BioCyc" id="PDIS435591:G1G5A-2640-MONOMER"/>
<dbReference type="UniPathway" id="UPA00558">
    <property type="reaction ID" value="UER00616"/>
</dbReference>
<dbReference type="Proteomes" id="UP000000566">
    <property type="component" value="Chromosome"/>
</dbReference>
<dbReference type="GO" id="GO:0005886">
    <property type="term" value="C:plasma membrane"/>
    <property type="evidence" value="ECO:0007669"/>
    <property type="project" value="UniProtKB-SubCell"/>
</dbReference>
<dbReference type="GO" id="GO:0004609">
    <property type="term" value="F:phosphatidylserine decarboxylase activity"/>
    <property type="evidence" value="ECO:0007669"/>
    <property type="project" value="UniProtKB-UniRule"/>
</dbReference>
<dbReference type="GO" id="GO:0006646">
    <property type="term" value="P:phosphatidylethanolamine biosynthetic process"/>
    <property type="evidence" value="ECO:0007669"/>
    <property type="project" value="UniProtKB-UniRule"/>
</dbReference>
<dbReference type="HAMAP" id="MF_00664">
    <property type="entry name" value="PS_decarb_PSD_A"/>
    <property type="match status" value="1"/>
</dbReference>
<dbReference type="InterPro" id="IPR003817">
    <property type="entry name" value="PS_Dcarbxylase"/>
</dbReference>
<dbReference type="InterPro" id="IPR033175">
    <property type="entry name" value="PSD-A"/>
</dbReference>
<dbReference type="NCBIfam" id="NF003678">
    <property type="entry name" value="PRK05305.1-2"/>
    <property type="match status" value="1"/>
</dbReference>
<dbReference type="PANTHER" id="PTHR35809">
    <property type="entry name" value="ARCHAETIDYLSERINE DECARBOXYLASE PROENZYME-RELATED"/>
    <property type="match status" value="1"/>
</dbReference>
<dbReference type="PANTHER" id="PTHR35809:SF1">
    <property type="entry name" value="ARCHAETIDYLSERINE DECARBOXYLASE PROENZYME-RELATED"/>
    <property type="match status" value="1"/>
</dbReference>
<dbReference type="Pfam" id="PF02666">
    <property type="entry name" value="PS_Dcarbxylase"/>
    <property type="match status" value="1"/>
</dbReference>
<gene>
    <name evidence="1" type="primary">psd</name>
    <name type="ordered locus">BDI_2570</name>
</gene>
<keyword id="KW-1003">Cell membrane</keyword>
<keyword id="KW-0210">Decarboxylase</keyword>
<keyword id="KW-0444">Lipid biosynthesis</keyword>
<keyword id="KW-0443">Lipid metabolism</keyword>
<keyword id="KW-0456">Lyase</keyword>
<keyword id="KW-0472">Membrane</keyword>
<keyword id="KW-0594">Phospholipid biosynthesis</keyword>
<keyword id="KW-1208">Phospholipid metabolism</keyword>
<keyword id="KW-0670">Pyruvate</keyword>
<keyword id="KW-1185">Reference proteome</keyword>
<keyword id="KW-0865">Zymogen</keyword>
<accession>A6LF25</accession>